<sequence length="80" mass="9320">MKRILIAPVRFYQRFISPVFPPSCRFELTCSNYMIQAIEKHGFKGVLMGLARILRCHPWSKTGKDPVPDHFSLKRNQEGE</sequence>
<proteinExistence type="inferred from homology"/>
<gene>
    <name type="ordered locus">SPH_1989</name>
</gene>
<evidence type="ECO:0000255" key="1">
    <source>
        <dbReference type="HAMAP-Rule" id="MF_00386"/>
    </source>
</evidence>
<evidence type="ECO:0000256" key="2">
    <source>
        <dbReference type="SAM" id="MobiDB-lite"/>
    </source>
</evidence>
<organism>
    <name type="scientific">Streptococcus pneumoniae (strain Hungary19A-6)</name>
    <dbReference type="NCBI Taxonomy" id="487214"/>
    <lineage>
        <taxon>Bacteria</taxon>
        <taxon>Bacillati</taxon>
        <taxon>Bacillota</taxon>
        <taxon>Bacilli</taxon>
        <taxon>Lactobacillales</taxon>
        <taxon>Streptococcaceae</taxon>
        <taxon>Streptococcus</taxon>
    </lineage>
</organism>
<name>YIDD_STRPI</name>
<feature type="chain" id="PRO_1000197787" description="Putative membrane protein insertion efficiency factor">
    <location>
        <begin position="1"/>
        <end position="80"/>
    </location>
</feature>
<feature type="region of interest" description="Disordered" evidence="2">
    <location>
        <begin position="61"/>
        <end position="80"/>
    </location>
</feature>
<feature type="compositionally biased region" description="Basic and acidic residues" evidence="2">
    <location>
        <begin position="62"/>
        <end position="80"/>
    </location>
</feature>
<protein>
    <recommendedName>
        <fullName evidence="1">Putative membrane protein insertion efficiency factor</fullName>
    </recommendedName>
</protein>
<reference key="1">
    <citation type="journal article" date="2010" name="Genome Biol.">
        <title>Structure and dynamics of the pan-genome of Streptococcus pneumoniae and closely related species.</title>
        <authorList>
            <person name="Donati C."/>
            <person name="Hiller N.L."/>
            <person name="Tettelin H."/>
            <person name="Muzzi A."/>
            <person name="Croucher N.J."/>
            <person name="Angiuoli S.V."/>
            <person name="Oggioni M."/>
            <person name="Dunning Hotopp J.C."/>
            <person name="Hu F.Z."/>
            <person name="Riley D.R."/>
            <person name="Covacci A."/>
            <person name="Mitchell T.J."/>
            <person name="Bentley S.D."/>
            <person name="Kilian M."/>
            <person name="Ehrlich G.D."/>
            <person name="Rappuoli R."/>
            <person name="Moxon E.R."/>
            <person name="Masignani V."/>
        </authorList>
    </citation>
    <scope>NUCLEOTIDE SEQUENCE [LARGE SCALE GENOMIC DNA]</scope>
    <source>
        <strain>Hungary19A-6</strain>
    </source>
</reference>
<dbReference type="EMBL" id="CP000936">
    <property type="protein sequence ID" value="ACA36259.1"/>
    <property type="molecule type" value="Genomic_DNA"/>
</dbReference>
<dbReference type="KEGG" id="spv:SPH_1989"/>
<dbReference type="HOGENOM" id="CLU_144811_5_2_9"/>
<dbReference type="Proteomes" id="UP000002163">
    <property type="component" value="Chromosome"/>
</dbReference>
<dbReference type="GO" id="GO:0005886">
    <property type="term" value="C:plasma membrane"/>
    <property type="evidence" value="ECO:0007669"/>
    <property type="project" value="UniProtKB-SubCell"/>
</dbReference>
<dbReference type="HAMAP" id="MF_00386">
    <property type="entry name" value="UPF0161_YidD"/>
    <property type="match status" value="1"/>
</dbReference>
<dbReference type="InterPro" id="IPR002696">
    <property type="entry name" value="Membr_insert_effic_factor_YidD"/>
</dbReference>
<dbReference type="NCBIfam" id="TIGR00278">
    <property type="entry name" value="membrane protein insertion efficiency factor YidD"/>
    <property type="match status" value="1"/>
</dbReference>
<dbReference type="PANTHER" id="PTHR33383">
    <property type="entry name" value="MEMBRANE PROTEIN INSERTION EFFICIENCY FACTOR-RELATED"/>
    <property type="match status" value="1"/>
</dbReference>
<dbReference type="PANTHER" id="PTHR33383:SF1">
    <property type="entry name" value="MEMBRANE PROTEIN INSERTION EFFICIENCY FACTOR-RELATED"/>
    <property type="match status" value="1"/>
</dbReference>
<dbReference type="Pfam" id="PF01809">
    <property type="entry name" value="YidD"/>
    <property type="match status" value="1"/>
</dbReference>
<dbReference type="SMART" id="SM01234">
    <property type="entry name" value="Haemolytic"/>
    <property type="match status" value="1"/>
</dbReference>
<accession>B1I883</accession>
<comment type="function">
    <text evidence="1">Could be involved in insertion of integral membrane proteins into the membrane.</text>
</comment>
<comment type="subcellular location">
    <subcellularLocation>
        <location evidence="1">Cell membrane</location>
        <topology evidence="1">Peripheral membrane protein</topology>
        <orientation evidence="1">Cytoplasmic side</orientation>
    </subcellularLocation>
</comment>
<comment type="similarity">
    <text evidence="1">Belongs to the UPF0161 family.</text>
</comment>
<keyword id="KW-1003">Cell membrane</keyword>
<keyword id="KW-0472">Membrane</keyword>